<accession>B3DQ31</accession>
<organism>
    <name type="scientific">Bifidobacterium longum (strain DJO10A)</name>
    <dbReference type="NCBI Taxonomy" id="205913"/>
    <lineage>
        <taxon>Bacteria</taxon>
        <taxon>Bacillati</taxon>
        <taxon>Actinomycetota</taxon>
        <taxon>Actinomycetes</taxon>
        <taxon>Bifidobacteriales</taxon>
        <taxon>Bifidobacteriaceae</taxon>
        <taxon>Bifidobacterium</taxon>
    </lineage>
</organism>
<comment type="function">
    <text evidence="1">Small subunit of the glutamine-dependent carbamoyl phosphate synthetase (CPSase). CPSase catalyzes the formation of carbamoyl phosphate from the ammonia moiety of glutamine, carbonate, and phosphate donated by ATP, constituting the first step of 2 biosynthetic pathways, one leading to arginine and/or urea and the other to pyrimidine nucleotides. The small subunit (glutamine amidotransferase) binds and cleaves glutamine to supply the large subunit with the substrate ammonia.</text>
</comment>
<comment type="catalytic activity">
    <reaction evidence="1">
        <text>hydrogencarbonate + L-glutamine + 2 ATP + H2O = carbamoyl phosphate + L-glutamate + 2 ADP + phosphate + 2 H(+)</text>
        <dbReference type="Rhea" id="RHEA:18633"/>
        <dbReference type="ChEBI" id="CHEBI:15377"/>
        <dbReference type="ChEBI" id="CHEBI:15378"/>
        <dbReference type="ChEBI" id="CHEBI:17544"/>
        <dbReference type="ChEBI" id="CHEBI:29985"/>
        <dbReference type="ChEBI" id="CHEBI:30616"/>
        <dbReference type="ChEBI" id="CHEBI:43474"/>
        <dbReference type="ChEBI" id="CHEBI:58228"/>
        <dbReference type="ChEBI" id="CHEBI:58359"/>
        <dbReference type="ChEBI" id="CHEBI:456216"/>
        <dbReference type="EC" id="6.3.5.5"/>
    </reaction>
</comment>
<comment type="catalytic activity">
    <molecule>Carbamoyl phosphate synthase small chain</molecule>
    <reaction evidence="1">
        <text>L-glutamine + H2O = L-glutamate + NH4(+)</text>
        <dbReference type="Rhea" id="RHEA:15889"/>
        <dbReference type="ChEBI" id="CHEBI:15377"/>
        <dbReference type="ChEBI" id="CHEBI:28938"/>
        <dbReference type="ChEBI" id="CHEBI:29985"/>
        <dbReference type="ChEBI" id="CHEBI:58359"/>
    </reaction>
</comment>
<comment type="pathway">
    <text evidence="1">Amino-acid biosynthesis; L-arginine biosynthesis; carbamoyl phosphate from bicarbonate: step 1/1.</text>
</comment>
<comment type="pathway">
    <text evidence="1">Pyrimidine metabolism; UMP biosynthesis via de novo pathway; (S)-dihydroorotate from bicarbonate: step 1/3.</text>
</comment>
<comment type="subunit">
    <text evidence="1">Composed of two chains; the small (or glutamine) chain promotes the hydrolysis of glutamine to ammonia, which is used by the large (or ammonia) chain to synthesize carbamoyl phosphate. Tetramer of heterodimers (alpha,beta)4.</text>
</comment>
<comment type="similarity">
    <text evidence="1">Belongs to the CarA family.</text>
</comment>
<name>CARA_BIFLD</name>
<sequence length="407" mass="44194">MSQNESGTIAIPMYDKDDAVLVLEDGQVYVGEPYGALGETTGEIVFATGMTGYQETLTDPSYDRQIVVQTFPHIGDTGVNSEDPESSRIWVAGYIVRDPSPNVSNWRAEGSLDDDLAKNGIVGLSHIDTRKLVRHLRSAGVMRAGIFSGDALTDQATGALKTIEQLLEDVKNTPQMQGLSLYDEVSTKGTYTIEPCGEYEGKEPLYTVAAVDLGIKGMTPHRMAERGCRVHVVPSTITFAEIENLNPDGVFFSNGPGDPEQAGPEIELLRQVLDAGYPFFGICFGNQLLGRALGFGTYKLKFGHRGINQPVKDLTTGKVEVTAHNHGFAVDAPIGKQVDAPFENGKYGKVFVSHIDLNDDVVEGLQCVDIPAFSVQYHPEAAAGPHDAAYLFDRFCELMKNNSKEGK</sequence>
<dbReference type="EC" id="6.3.5.5" evidence="1"/>
<dbReference type="EMBL" id="CP000605">
    <property type="protein sequence ID" value="ACD97530.1"/>
    <property type="molecule type" value="Genomic_DNA"/>
</dbReference>
<dbReference type="SMR" id="B3DQ31"/>
<dbReference type="KEGG" id="blj:BLD_0084"/>
<dbReference type="HOGENOM" id="CLU_035901_2_1_11"/>
<dbReference type="UniPathway" id="UPA00068">
    <property type="reaction ID" value="UER00171"/>
</dbReference>
<dbReference type="UniPathway" id="UPA00070">
    <property type="reaction ID" value="UER00115"/>
</dbReference>
<dbReference type="Proteomes" id="UP000002419">
    <property type="component" value="Chromosome"/>
</dbReference>
<dbReference type="GO" id="GO:0005524">
    <property type="term" value="F:ATP binding"/>
    <property type="evidence" value="ECO:0007669"/>
    <property type="project" value="UniProtKB-UniRule"/>
</dbReference>
<dbReference type="GO" id="GO:0004088">
    <property type="term" value="F:carbamoyl-phosphate synthase (glutamine-hydrolyzing) activity"/>
    <property type="evidence" value="ECO:0007669"/>
    <property type="project" value="UniProtKB-UniRule"/>
</dbReference>
<dbReference type="GO" id="GO:0004359">
    <property type="term" value="F:glutaminase activity"/>
    <property type="evidence" value="ECO:0007669"/>
    <property type="project" value="RHEA"/>
</dbReference>
<dbReference type="GO" id="GO:0006207">
    <property type="term" value="P:'de novo' pyrimidine nucleobase biosynthetic process"/>
    <property type="evidence" value="ECO:0007669"/>
    <property type="project" value="InterPro"/>
</dbReference>
<dbReference type="GO" id="GO:0044205">
    <property type="term" value="P:'de novo' UMP biosynthetic process"/>
    <property type="evidence" value="ECO:0007669"/>
    <property type="project" value="UniProtKB-UniRule"/>
</dbReference>
<dbReference type="GO" id="GO:0006541">
    <property type="term" value="P:glutamine metabolic process"/>
    <property type="evidence" value="ECO:0007669"/>
    <property type="project" value="InterPro"/>
</dbReference>
<dbReference type="GO" id="GO:0006526">
    <property type="term" value="P:L-arginine biosynthetic process"/>
    <property type="evidence" value="ECO:0007669"/>
    <property type="project" value="UniProtKB-UniRule"/>
</dbReference>
<dbReference type="CDD" id="cd01744">
    <property type="entry name" value="GATase1_CPSase"/>
    <property type="match status" value="1"/>
</dbReference>
<dbReference type="FunFam" id="3.50.30.20:FF:000001">
    <property type="entry name" value="Carbamoyl-phosphate synthase small chain"/>
    <property type="match status" value="1"/>
</dbReference>
<dbReference type="Gene3D" id="3.40.50.880">
    <property type="match status" value="1"/>
</dbReference>
<dbReference type="Gene3D" id="3.50.30.20">
    <property type="entry name" value="Carbamoyl-phosphate synthase small subunit, N-terminal domain"/>
    <property type="match status" value="1"/>
</dbReference>
<dbReference type="HAMAP" id="MF_01209">
    <property type="entry name" value="CPSase_S_chain"/>
    <property type="match status" value="1"/>
</dbReference>
<dbReference type="InterPro" id="IPR050472">
    <property type="entry name" value="Anth_synth/Amidotransfase"/>
</dbReference>
<dbReference type="InterPro" id="IPR006274">
    <property type="entry name" value="CarbamoylP_synth_ssu"/>
</dbReference>
<dbReference type="InterPro" id="IPR002474">
    <property type="entry name" value="CarbamoylP_synth_ssu_N"/>
</dbReference>
<dbReference type="InterPro" id="IPR036480">
    <property type="entry name" value="CarbP_synth_ssu_N_sf"/>
</dbReference>
<dbReference type="InterPro" id="IPR029062">
    <property type="entry name" value="Class_I_gatase-like"/>
</dbReference>
<dbReference type="InterPro" id="IPR035686">
    <property type="entry name" value="CPSase_GATase1"/>
</dbReference>
<dbReference type="InterPro" id="IPR017926">
    <property type="entry name" value="GATASE"/>
</dbReference>
<dbReference type="NCBIfam" id="TIGR01368">
    <property type="entry name" value="CPSaseIIsmall"/>
    <property type="match status" value="1"/>
</dbReference>
<dbReference type="NCBIfam" id="NF009475">
    <property type="entry name" value="PRK12838.1"/>
    <property type="match status" value="1"/>
</dbReference>
<dbReference type="PANTHER" id="PTHR43418:SF7">
    <property type="entry name" value="CARBAMOYL-PHOSPHATE SYNTHASE SMALL CHAIN"/>
    <property type="match status" value="1"/>
</dbReference>
<dbReference type="PANTHER" id="PTHR43418">
    <property type="entry name" value="MULTIFUNCTIONAL TRYPTOPHAN BIOSYNTHESIS PROTEIN-RELATED"/>
    <property type="match status" value="1"/>
</dbReference>
<dbReference type="Pfam" id="PF00988">
    <property type="entry name" value="CPSase_sm_chain"/>
    <property type="match status" value="1"/>
</dbReference>
<dbReference type="Pfam" id="PF00117">
    <property type="entry name" value="GATase"/>
    <property type="match status" value="1"/>
</dbReference>
<dbReference type="PRINTS" id="PR00097">
    <property type="entry name" value="ANTSNTHASEII"/>
</dbReference>
<dbReference type="PRINTS" id="PR00099">
    <property type="entry name" value="CPSGATASE"/>
</dbReference>
<dbReference type="PRINTS" id="PR00096">
    <property type="entry name" value="GATASE"/>
</dbReference>
<dbReference type="SMART" id="SM01097">
    <property type="entry name" value="CPSase_sm_chain"/>
    <property type="match status" value="1"/>
</dbReference>
<dbReference type="SUPFAM" id="SSF52021">
    <property type="entry name" value="Carbamoyl phosphate synthetase, small subunit N-terminal domain"/>
    <property type="match status" value="1"/>
</dbReference>
<dbReference type="SUPFAM" id="SSF52317">
    <property type="entry name" value="Class I glutamine amidotransferase-like"/>
    <property type="match status" value="1"/>
</dbReference>
<dbReference type="PROSITE" id="PS51273">
    <property type="entry name" value="GATASE_TYPE_1"/>
    <property type="match status" value="1"/>
</dbReference>
<gene>
    <name evidence="1" type="primary">carA</name>
    <name type="ordered locus">BLD_0084</name>
</gene>
<feature type="chain" id="PRO_1000138851" description="Carbamoyl phosphate synthase small chain">
    <location>
        <begin position="1"/>
        <end position="407"/>
    </location>
</feature>
<feature type="domain" description="Glutamine amidotransferase type-1" evidence="1">
    <location>
        <begin position="207"/>
        <end position="405"/>
    </location>
</feature>
<feature type="region of interest" description="CPSase" evidence="1">
    <location>
        <begin position="1"/>
        <end position="203"/>
    </location>
</feature>
<feature type="active site" description="Nucleophile" evidence="1">
    <location>
        <position position="283"/>
    </location>
</feature>
<feature type="active site" evidence="1">
    <location>
        <position position="378"/>
    </location>
</feature>
<feature type="active site" evidence="1">
    <location>
        <position position="380"/>
    </location>
</feature>
<feature type="binding site" evidence="1">
    <location>
        <position position="61"/>
    </location>
    <ligand>
        <name>L-glutamine</name>
        <dbReference type="ChEBI" id="CHEBI:58359"/>
    </ligand>
</feature>
<feature type="binding site" evidence="1">
    <location>
        <position position="255"/>
    </location>
    <ligand>
        <name>L-glutamine</name>
        <dbReference type="ChEBI" id="CHEBI:58359"/>
    </ligand>
</feature>
<feature type="binding site" evidence="1">
    <location>
        <position position="257"/>
    </location>
    <ligand>
        <name>L-glutamine</name>
        <dbReference type="ChEBI" id="CHEBI:58359"/>
    </ligand>
</feature>
<feature type="binding site" evidence="1">
    <location>
        <position position="284"/>
    </location>
    <ligand>
        <name>L-glutamine</name>
        <dbReference type="ChEBI" id="CHEBI:58359"/>
    </ligand>
</feature>
<feature type="binding site" evidence="1">
    <location>
        <position position="287"/>
    </location>
    <ligand>
        <name>L-glutamine</name>
        <dbReference type="ChEBI" id="CHEBI:58359"/>
    </ligand>
</feature>
<feature type="binding site" evidence="1">
    <location>
        <position position="325"/>
    </location>
    <ligand>
        <name>L-glutamine</name>
        <dbReference type="ChEBI" id="CHEBI:58359"/>
    </ligand>
</feature>
<feature type="binding site" evidence="1">
    <location>
        <position position="327"/>
    </location>
    <ligand>
        <name>L-glutamine</name>
        <dbReference type="ChEBI" id="CHEBI:58359"/>
    </ligand>
</feature>
<feature type="binding site" evidence="1">
    <location>
        <position position="328"/>
    </location>
    <ligand>
        <name>L-glutamine</name>
        <dbReference type="ChEBI" id="CHEBI:58359"/>
    </ligand>
</feature>
<keyword id="KW-0028">Amino-acid biosynthesis</keyword>
<keyword id="KW-0055">Arginine biosynthesis</keyword>
<keyword id="KW-0067">ATP-binding</keyword>
<keyword id="KW-0315">Glutamine amidotransferase</keyword>
<keyword id="KW-0436">Ligase</keyword>
<keyword id="KW-0547">Nucleotide-binding</keyword>
<keyword id="KW-0665">Pyrimidine biosynthesis</keyword>
<proteinExistence type="inferred from homology"/>
<protein>
    <recommendedName>
        <fullName evidence="1">Carbamoyl phosphate synthase small chain</fullName>
        <ecNumber evidence="1">6.3.5.5</ecNumber>
    </recommendedName>
    <alternativeName>
        <fullName evidence="1">Carbamoyl phosphate synthetase glutamine chain</fullName>
    </alternativeName>
</protein>
<evidence type="ECO:0000255" key="1">
    <source>
        <dbReference type="HAMAP-Rule" id="MF_01209"/>
    </source>
</evidence>
<reference key="1">
    <citation type="journal article" date="2008" name="BMC Genomics">
        <title>Comparative genomic analysis of the gut bacterium Bifidobacterium longum reveals loci susceptible to deletion during pure culture growth.</title>
        <authorList>
            <person name="Lee J.H."/>
            <person name="Karamychev V.N."/>
            <person name="Kozyavkin S.A."/>
            <person name="Mills D."/>
            <person name="Pavlov A.R."/>
            <person name="Pavlova N.V."/>
            <person name="Polouchine N.N."/>
            <person name="Richardson P.M."/>
            <person name="Shakhova V.V."/>
            <person name="Slesarev A.I."/>
            <person name="Weimer B."/>
            <person name="O'Sullivan D.J."/>
        </authorList>
    </citation>
    <scope>NUCLEOTIDE SEQUENCE [LARGE SCALE GENOMIC DNA]</scope>
    <source>
        <strain>DJO10A</strain>
    </source>
</reference>